<gene>
    <name type="primary">OPSB</name>
    <name type="ORF">TRV_06035</name>
</gene>
<proteinExistence type="inferred from homology"/>
<keyword id="KW-0064">Aspartyl protease</keyword>
<keyword id="KW-1003">Cell membrane</keyword>
<keyword id="KW-0325">Glycoprotein</keyword>
<keyword id="KW-0336">GPI-anchor</keyword>
<keyword id="KW-0378">Hydrolase</keyword>
<keyword id="KW-0449">Lipoprotein</keyword>
<keyword id="KW-0472">Membrane</keyword>
<keyword id="KW-0645">Protease</keyword>
<keyword id="KW-0732">Signal</keyword>
<keyword id="KW-0843">Virulence</keyword>
<keyword id="KW-0865">Zymogen</keyword>
<feature type="signal peptide" evidence="2">
    <location>
        <begin position="1"/>
        <end position="19"/>
    </location>
</feature>
<feature type="chain" id="PRO_0000397710" description="Probable aspartic-type endopeptidase OPSB">
    <location>
        <begin position="20"/>
        <end position="467"/>
    </location>
</feature>
<feature type="propeptide" id="PRO_0000397711" description="Removed in mature form" evidence="2">
    <location>
        <begin position="468"/>
        <end position="495"/>
    </location>
</feature>
<feature type="domain" description="Peptidase A1" evidence="3">
    <location>
        <begin position="73"/>
        <end position="408"/>
    </location>
</feature>
<feature type="region of interest" description="Disordered" evidence="4">
    <location>
        <begin position="448"/>
        <end position="470"/>
    </location>
</feature>
<feature type="active site" evidence="1">
    <location>
        <position position="91"/>
    </location>
</feature>
<feature type="active site" evidence="1">
    <location>
        <position position="290"/>
    </location>
</feature>
<feature type="lipid moiety-binding region" description="GPI-anchor amidated alanine" evidence="2">
    <location>
        <position position="467"/>
    </location>
</feature>
<feature type="glycosylation site" description="N-linked (GlcNAc...) asparagine" evidence="2">
    <location>
        <position position="76"/>
    </location>
</feature>
<feature type="glycosylation site" description="N-linked (GlcNAc...) asparagine" evidence="2">
    <location>
        <position position="136"/>
    </location>
</feature>
<feature type="glycosylation site" description="N-linked (GlcNAc...) asparagine" evidence="2">
    <location>
        <position position="413"/>
    </location>
</feature>
<accession>D4DFT3</accession>
<protein>
    <recommendedName>
        <fullName>Probable aspartic-type endopeptidase OPSB</fullName>
        <ecNumber>3.4.23.-</ecNumber>
    </recommendedName>
</protein>
<evidence type="ECO:0000250" key="1"/>
<evidence type="ECO:0000255" key="2"/>
<evidence type="ECO:0000255" key="3">
    <source>
        <dbReference type="PROSITE-ProRule" id="PRU01103"/>
    </source>
</evidence>
<evidence type="ECO:0000256" key="4">
    <source>
        <dbReference type="SAM" id="MobiDB-lite"/>
    </source>
</evidence>
<evidence type="ECO:0000305" key="5"/>
<name>OPSB_TRIVH</name>
<sequence length="495" mass="51834">MRGDSFIWSLATAIPLLSTAVESLKVVKRDNPSVLGFDIERFQAAKPVHRDIIAKRASTKTISQDLDNQKNLYFCNLTLGTPPQTIRAHIDTGSSDLWVNTAESRFCSSRRAPCSQGGTYDSSSSSTYQLVNNDFNISYVDGSGATGDYVTDVINVGGIKLKDFQFAIGHTSSSPLGVLGIGYEAGEAQVTRSGDQSYPNLPAALVKAGHIRSNAYSLWLNDLSASRGQILFGGIDTGKFQGKLQTVPVLHTSRGDYTSLVVALTGVGIRTGSDGSIDTFPSQPVAVAMDSGSSLSYLPDALAAKVYNSVDAVFDPANNLAFVPCSMANDKRKLVFTFSSPQIAVGMDELVIDLGPDANGNEATFRDGSKACVFGIAPAGSSISILGDTVLRSAYLVYDLDNNEISIAPTRFNSTETNIMEIGTGENSVPDATGVPNAVTSAQVTQATGLPGVETGVPGSRPPSSKAAGQAKRPDFVLGVAAVGLAGAGMLFAAM</sequence>
<reference key="1">
    <citation type="journal article" date="2011" name="Genome Biol.">
        <title>Comparative and functional genomics provide insights into the pathogenicity of dermatophytic fungi.</title>
        <authorList>
            <person name="Burmester A."/>
            <person name="Shelest E."/>
            <person name="Gloeckner G."/>
            <person name="Heddergott C."/>
            <person name="Schindler S."/>
            <person name="Staib P."/>
            <person name="Heidel A."/>
            <person name="Felder M."/>
            <person name="Petzold A."/>
            <person name="Szafranski K."/>
            <person name="Feuermann M."/>
            <person name="Pedruzzi I."/>
            <person name="Priebe S."/>
            <person name="Groth M."/>
            <person name="Winkler R."/>
            <person name="Li W."/>
            <person name="Kniemeyer O."/>
            <person name="Schroeckh V."/>
            <person name="Hertweck C."/>
            <person name="Hube B."/>
            <person name="White T.C."/>
            <person name="Platzer M."/>
            <person name="Guthke R."/>
            <person name="Heitman J."/>
            <person name="Woestemeyer J."/>
            <person name="Zipfel P.F."/>
            <person name="Monod M."/>
            <person name="Brakhage A.A."/>
        </authorList>
    </citation>
    <scope>NUCLEOTIDE SEQUENCE [LARGE SCALE GENOMIC DNA]</scope>
    <source>
        <strain>HKI 0517</strain>
    </source>
</reference>
<comment type="function">
    <text evidence="1">Probable GPI-anchored aspartic-type endopeptidase which contributes to virulence.</text>
</comment>
<comment type="subcellular location">
    <subcellularLocation>
        <location evidence="5">Cell membrane</location>
        <topology evidence="5">Lipid-anchor</topology>
        <topology evidence="5">GPI-anchor</topology>
    </subcellularLocation>
</comment>
<comment type="similarity">
    <text evidence="5">Belongs to the peptidase A1 family.</text>
</comment>
<organism>
    <name type="scientific">Trichophyton verrucosum (strain HKI 0517)</name>
    <dbReference type="NCBI Taxonomy" id="663202"/>
    <lineage>
        <taxon>Eukaryota</taxon>
        <taxon>Fungi</taxon>
        <taxon>Dikarya</taxon>
        <taxon>Ascomycota</taxon>
        <taxon>Pezizomycotina</taxon>
        <taxon>Eurotiomycetes</taxon>
        <taxon>Eurotiomycetidae</taxon>
        <taxon>Onygenales</taxon>
        <taxon>Arthrodermataceae</taxon>
        <taxon>Trichophyton</taxon>
    </lineage>
</organism>
<dbReference type="EC" id="3.4.23.-"/>
<dbReference type="EMBL" id="ACYE01000341">
    <property type="protein sequence ID" value="EFE39309.1"/>
    <property type="molecule type" value="Genomic_DNA"/>
</dbReference>
<dbReference type="RefSeq" id="XP_003019933.1">
    <property type="nucleotide sequence ID" value="XM_003019887.1"/>
</dbReference>
<dbReference type="SMR" id="D4DFT3"/>
<dbReference type="GlyCosmos" id="D4DFT3">
    <property type="glycosylation" value="3 sites, No reported glycans"/>
</dbReference>
<dbReference type="GeneID" id="9584685"/>
<dbReference type="KEGG" id="tve:TRV_06035"/>
<dbReference type="HOGENOM" id="CLU_013253_9_3_1"/>
<dbReference type="OrthoDB" id="3291at34384"/>
<dbReference type="Proteomes" id="UP000008383">
    <property type="component" value="Unassembled WGS sequence"/>
</dbReference>
<dbReference type="GO" id="GO:0005886">
    <property type="term" value="C:plasma membrane"/>
    <property type="evidence" value="ECO:0007669"/>
    <property type="project" value="UniProtKB-SubCell"/>
</dbReference>
<dbReference type="GO" id="GO:0098552">
    <property type="term" value="C:side of membrane"/>
    <property type="evidence" value="ECO:0007669"/>
    <property type="project" value="UniProtKB-KW"/>
</dbReference>
<dbReference type="GO" id="GO:0004190">
    <property type="term" value="F:aspartic-type endopeptidase activity"/>
    <property type="evidence" value="ECO:0007669"/>
    <property type="project" value="UniProtKB-KW"/>
</dbReference>
<dbReference type="GO" id="GO:0006508">
    <property type="term" value="P:proteolysis"/>
    <property type="evidence" value="ECO:0007669"/>
    <property type="project" value="UniProtKB-KW"/>
</dbReference>
<dbReference type="CDD" id="cd05474">
    <property type="entry name" value="SAP_like"/>
    <property type="match status" value="1"/>
</dbReference>
<dbReference type="FunFam" id="2.40.70.10:FF:000011">
    <property type="entry name" value="Aspartic protease"/>
    <property type="match status" value="1"/>
</dbReference>
<dbReference type="Gene3D" id="2.40.70.10">
    <property type="entry name" value="Acid Proteases"/>
    <property type="match status" value="2"/>
</dbReference>
<dbReference type="InterPro" id="IPR001461">
    <property type="entry name" value="Aspartic_peptidase_A1"/>
</dbReference>
<dbReference type="InterPro" id="IPR033121">
    <property type="entry name" value="PEPTIDASE_A1"/>
</dbReference>
<dbReference type="InterPro" id="IPR021109">
    <property type="entry name" value="Peptidase_aspartic_dom_sf"/>
</dbReference>
<dbReference type="InterPro" id="IPR033876">
    <property type="entry name" value="SAP-like"/>
</dbReference>
<dbReference type="PANTHER" id="PTHR47966:SF65">
    <property type="entry name" value="ASPARTIC-TYPE ENDOPEPTIDASE"/>
    <property type="match status" value="1"/>
</dbReference>
<dbReference type="PANTHER" id="PTHR47966">
    <property type="entry name" value="BETA-SITE APP-CLEAVING ENZYME, ISOFORM A-RELATED"/>
    <property type="match status" value="1"/>
</dbReference>
<dbReference type="Pfam" id="PF00026">
    <property type="entry name" value="Asp"/>
    <property type="match status" value="1"/>
</dbReference>
<dbReference type="PRINTS" id="PR00792">
    <property type="entry name" value="PEPSIN"/>
</dbReference>
<dbReference type="SUPFAM" id="SSF50630">
    <property type="entry name" value="Acid proteases"/>
    <property type="match status" value="1"/>
</dbReference>
<dbReference type="PROSITE" id="PS51767">
    <property type="entry name" value="PEPTIDASE_A1"/>
    <property type="match status" value="1"/>
</dbReference>